<name>RS9_SODGM</name>
<protein>
    <recommendedName>
        <fullName evidence="1">Small ribosomal subunit protein uS9</fullName>
    </recommendedName>
    <alternativeName>
        <fullName evidence="2">30S ribosomal protein S9</fullName>
    </alternativeName>
</protein>
<sequence length="130" mass="14689">MAENQYYGTGRRKSSSARVFVKAGSGNIVINQRSLDQYFGRETARMVVRQPLELVDMVGKLDLYITVKGGGISGQAGAIRHGITRALMEYDETLRADLRKAGFVTRDARQVERKKVGLRKARRRPQFSKR</sequence>
<accession>Q2NWI3</accession>
<dbReference type="EMBL" id="AP008232">
    <property type="protein sequence ID" value="BAE73492.1"/>
    <property type="molecule type" value="Genomic_DNA"/>
</dbReference>
<dbReference type="RefSeq" id="WP_011410081.1">
    <property type="nucleotide sequence ID" value="NZ_LN854557.1"/>
</dbReference>
<dbReference type="SMR" id="Q2NWI3"/>
<dbReference type="STRING" id="343509.SG0217"/>
<dbReference type="KEGG" id="sgl:SG0217"/>
<dbReference type="eggNOG" id="COG0103">
    <property type="taxonomic scope" value="Bacteria"/>
</dbReference>
<dbReference type="HOGENOM" id="CLU_046483_2_1_6"/>
<dbReference type="OrthoDB" id="9803965at2"/>
<dbReference type="BioCyc" id="SGLO343509:SGP1_RS02000-MONOMER"/>
<dbReference type="Proteomes" id="UP000001932">
    <property type="component" value="Chromosome"/>
</dbReference>
<dbReference type="GO" id="GO:0022627">
    <property type="term" value="C:cytosolic small ribosomal subunit"/>
    <property type="evidence" value="ECO:0007669"/>
    <property type="project" value="TreeGrafter"/>
</dbReference>
<dbReference type="GO" id="GO:0003723">
    <property type="term" value="F:RNA binding"/>
    <property type="evidence" value="ECO:0007669"/>
    <property type="project" value="TreeGrafter"/>
</dbReference>
<dbReference type="GO" id="GO:0003735">
    <property type="term" value="F:structural constituent of ribosome"/>
    <property type="evidence" value="ECO:0007669"/>
    <property type="project" value="InterPro"/>
</dbReference>
<dbReference type="GO" id="GO:0006412">
    <property type="term" value="P:translation"/>
    <property type="evidence" value="ECO:0007669"/>
    <property type="project" value="UniProtKB-UniRule"/>
</dbReference>
<dbReference type="FunFam" id="3.30.230.10:FF:000001">
    <property type="entry name" value="30S ribosomal protein S9"/>
    <property type="match status" value="1"/>
</dbReference>
<dbReference type="Gene3D" id="3.30.230.10">
    <property type="match status" value="1"/>
</dbReference>
<dbReference type="HAMAP" id="MF_00532_B">
    <property type="entry name" value="Ribosomal_uS9_B"/>
    <property type="match status" value="1"/>
</dbReference>
<dbReference type="InterPro" id="IPR020568">
    <property type="entry name" value="Ribosomal_Su5_D2-typ_SF"/>
</dbReference>
<dbReference type="InterPro" id="IPR000754">
    <property type="entry name" value="Ribosomal_uS9"/>
</dbReference>
<dbReference type="InterPro" id="IPR023035">
    <property type="entry name" value="Ribosomal_uS9_bac/plastid"/>
</dbReference>
<dbReference type="InterPro" id="IPR020574">
    <property type="entry name" value="Ribosomal_uS9_CS"/>
</dbReference>
<dbReference type="InterPro" id="IPR014721">
    <property type="entry name" value="Ribsml_uS5_D2-typ_fold_subgr"/>
</dbReference>
<dbReference type="NCBIfam" id="NF001099">
    <property type="entry name" value="PRK00132.1"/>
    <property type="match status" value="1"/>
</dbReference>
<dbReference type="PANTHER" id="PTHR21569">
    <property type="entry name" value="RIBOSOMAL PROTEIN S9"/>
    <property type="match status" value="1"/>
</dbReference>
<dbReference type="PANTHER" id="PTHR21569:SF1">
    <property type="entry name" value="SMALL RIBOSOMAL SUBUNIT PROTEIN US9M"/>
    <property type="match status" value="1"/>
</dbReference>
<dbReference type="Pfam" id="PF00380">
    <property type="entry name" value="Ribosomal_S9"/>
    <property type="match status" value="1"/>
</dbReference>
<dbReference type="SUPFAM" id="SSF54211">
    <property type="entry name" value="Ribosomal protein S5 domain 2-like"/>
    <property type="match status" value="1"/>
</dbReference>
<dbReference type="PROSITE" id="PS00360">
    <property type="entry name" value="RIBOSOMAL_S9"/>
    <property type="match status" value="1"/>
</dbReference>
<gene>
    <name evidence="1" type="primary">rpsI</name>
    <name type="ordered locus">SG0217</name>
</gene>
<comment type="similarity">
    <text evidence="1">Belongs to the universal ribosomal protein uS9 family.</text>
</comment>
<reference key="1">
    <citation type="journal article" date="2006" name="Genome Res.">
        <title>Massive genome erosion and functional adaptations provide insights into the symbiotic lifestyle of Sodalis glossinidius in the tsetse host.</title>
        <authorList>
            <person name="Toh H."/>
            <person name="Weiss B.L."/>
            <person name="Perkin S.A.H."/>
            <person name="Yamashita A."/>
            <person name="Oshima K."/>
            <person name="Hattori M."/>
            <person name="Aksoy S."/>
        </authorList>
    </citation>
    <scope>NUCLEOTIDE SEQUENCE [LARGE SCALE GENOMIC DNA]</scope>
    <source>
        <strain>morsitans</strain>
    </source>
</reference>
<proteinExistence type="inferred from homology"/>
<feature type="chain" id="PRO_1000051333" description="Small ribosomal subunit protein uS9">
    <location>
        <begin position="1"/>
        <end position="130"/>
    </location>
</feature>
<organism>
    <name type="scientific">Sodalis glossinidius (strain morsitans)</name>
    <dbReference type="NCBI Taxonomy" id="343509"/>
    <lineage>
        <taxon>Bacteria</taxon>
        <taxon>Pseudomonadati</taxon>
        <taxon>Pseudomonadota</taxon>
        <taxon>Gammaproteobacteria</taxon>
        <taxon>Enterobacterales</taxon>
        <taxon>Bruguierivoracaceae</taxon>
        <taxon>Sodalis</taxon>
    </lineage>
</organism>
<evidence type="ECO:0000255" key="1">
    <source>
        <dbReference type="HAMAP-Rule" id="MF_00532"/>
    </source>
</evidence>
<evidence type="ECO:0000305" key="2"/>
<keyword id="KW-0687">Ribonucleoprotein</keyword>
<keyword id="KW-0689">Ribosomal protein</keyword>